<evidence type="ECO:0000255" key="1">
    <source>
        <dbReference type="HAMAP-Rule" id="MF_00454"/>
    </source>
</evidence>
<accession>Q5NI30</accession>
<comment type="function">
    <text evidence="1">Fluoride-specific ion channel. Important for reducing fluoride concentration in the cell, thus reducing its toxicity.</text>
</comment>
<comment type="catalytic activity">
    <reaction evidence="1">
        <text>fluoride(in) = fluoride(out)</text>
        <dbReference type="Rhea" id="RHEA:76159"/>
        <dbReference type="ChEBI" id="CHEBI:17051"/>
    </reaction>
    <physiologicalReaction direction="left-to-right" evidence="1">
        <dbReference type="Rhea" id="RHEA:76160"/>
    </physiologicalReaction>
</comment>
<comment type="activity regulation">
    <text evidence="1">Na(+) is not transported, but it plays an essential structural role and its presence is essential for fluoride channel function.</text>
</comment>
<comment type="subcellular location">
    <subcellularLocation>
        <location evidence="1">Cell inner membrane</location>
        <topology evidence="1">Multi-pass membrane protein</topology>
    </subcellularLocation>
</comment>
<comment type="similarity">
    <text evidence="1">Belongs to the fluoride channel Fluc/FEX (TC 1.A.43) family.</text>
</comment>
<keyword id="KW-0997">Cell inner membrane</keyword>
<keyword id="KW-1003">Cell membrane</keyword>
<keyword id="KW-0407">Ion channel</keyword>
<keyword id="KW-0406">Ion transport</keyword>
<keyword id="KW-0472">Membrane</keyword>
<keyword id="KW-0479">Metal-binding</keyword>
<keyword id="KW-1185">Reference proteome</keyword>
<keyword id="KW-0915">Sodium</keyword>
<keyword id="KW-0812">Transmembrane</keyword>
<keyword id="KW-1133">Transmembrane helix</keyword>
<keyword id="KW-0813">Transport</keyword>
<feature type="chain" id="PRO_0000110101" description="Fluoride-specific ion channel FluC">
    <location>
        <begin position="1"/>
        <end position="130"/>
    </location>
</feature>
<feature type="transmembrane region" description="Helical" evidence="1">
    <location>
        <begin position="2"/>
        <end position="22"/>
    </location>
</feature>
<feature type="transmembrane region" description="Helical" evidence="1">
    <location>
        <begin position="36"/>
        <end position="56"/>
    </location>
</feature>
<feature type="transmembrane region" description="Helical" evidence="1">
    <location>
        <begin position="71"/>
        <end position="91"/>
    </location>
</feature>
<feature type="transmembrane region" description="Helical" evidence="1">
    <location>
        <begin position="100"/>
        <end position="120"/>
    </location>
</feature>
<feature type="binding site" evidence="1">
    <location>
        <position position="79"/>
    </location>
    <ligand>
        <name>Na(+)</name>
        <dbReference type="ChEBI" id="CHEBI:29101"/>
        <note>structural</note>
    </ligand>
</feature>
<feature type="binding site" evidence="1">
    <location>
        <position position="82"/>
    </location>
    <ligand>
        <name>Na(+)</name>
        <dbReference type="ChEBI" id="CHEBI:29101"/>
        <note>structural</note>
    </ligand>
</feature>
<dbReference type="EMBL" id="AJ749949">
    <property type="protein sequence ID" value="CAG44893.1"/>
    <property type="molecule type" value="Genomic_DNA"/>
</dbReference>
<dbReference type="RefSeq" id="WP_003021730.1">
    <property type="nucleotide sequence ID" value="NC_006570.2"/>
</dbReference>
<dbReference type="RefSeq" id="YP_169312.1">
    <property type="nucleotide sequence ID" value="NC_006570.2"/>
</dbReference>
<dbReference type="SMR" id="Q5NI30"/>
<dbReference type="STRING" id="177416.FTT_0260"/>
<dbReference type="DNASU" id="3191891"/>
<dbReference type="EnsemblBacteria" id="CAG44893">
    <property type="protein sequence ID" value="CAG44893"/>
    <property type="gene ID" value="FTT_0260"/>
</dbReference>
<dbReference type="KEGG" id="ftu:FTT_0260"/>
<dbReference type="eggNOG" id="COG0239">
    <property type="taxonomic scope" value="Bacteria"/>
</dbReference>
<dbReference type="OrthoDB" id="5604762at2"/>
<dbReference type="Proteomes" id="UP000001174">
    <property type="component" value="Chromosome"/>
</dbReference>
<dbReference type="GO" id="GO:0005886">
    <property type="term" value="C:plasma membrane"/>
    <property type="evidence" value="ECO:0007669"/>
    <property type="project" value="UniProtKB-SubCell"/>
</dbReference>
<dbReference type="GO" id="GO:0062054">
    <property type="term" value="F:fluoride channel activity"/>
    <property type="evidence" value="ECO:0007669"/>
    <property type="project" value="UniProtKB-UniRule"/>
</dbReference>
<dbReference type="GO" id="GO:0046872">
    <property type="term" value="F:metal ion binding"/>
    <property type="evidence" value="ECO:0007669"/>
    <property type="project" value="UniProtKB-KW"/>
</dbReference>
<dbReference type="GO" id="GO:0140114">
    <property type="term" value="P:cellular detoxification of fluoride"/>
    <property type="evidence" value="ECO:0007669"/>
    <property type="project" value="UniProtKB-UniRule"/>
</dbReference>
<dbReference type="HAMAP" id="MF_00454">
    <property type="entry name" value="FluC"/>
    <property type="match status" value="1"/>
</dbReference>
<dbReference type="InterPro" id="IPR003691">
    <property type="entry name" value="FluC"/>
</dbReference>
<dbReference type="NCBIfam" id="TIGR00494">
    <property type="entry name" value="crcB"/>
    <property type="match status" value="1"/>
</dbReference>
<dbReference type="PANTHER" id="PTHR28259">
    <property type="entry name" value="FLUORIDE EXPORT PROTEIN 1-RELATED"/>
    <property type="match status" value="1"/>
</dbReference>
<dbReference type="PANTHER" id="PTHR28259:SF1">
    <property type="entry name" value="FLUORIDE EXPORT PROTEIN 1-RELATED"/>
    <property type="match status" value="1"/>
</dbReference>
<dbReference type="Pfam" id="PF02537">
    <property type="entry name" value="CRCB"/>
    <property type="match status" value="1"/>
</dbReference>
<reference key="1">
    <citation type="journal article" date="2005" name="Nat. Genet.">
        <title>The complete genome sequence of Francisella tularensis, the causative agent of tularemia.</title>
        <authorList>
            <person name="Larsson P."/>
            <person name="Oyston P.C.F."/>
            <person name="Chain P."/>
            <person name="Chu M.C."/>
            <person name="Duffield M."/>
            <person name="Fuxelius H.-H."/>
            <person name="Garcia E."/>
            <person name="Haelltorp G."/>
            <person name="Johansson D."/>
            <person name="Isherwood K.E."/>
            <person name="Karp P.D."/>
            <person name="Larsson E."/>
            <person name="Liu Y."/>
            <person name="Michell S."/>
            <person name="Prior J."/>
            <person name="Prior R."/>
            <person name="Malfatti S."/>
            <person name="Sjoestedt A."/>
            <person name="Svensson K."/>
            <person name="Thompson N."/>
            <person name="Vergez L."/>
            <person name="Wagg J.K."/>
            <person name="Wren B.W."/>
            <person name="Lindler L.E."/>
            <person name="Andersson S.G.E."/>
            <person name="Forsman M."/>
            <person name="Titball R.W."/>
        </authorList>
    </citation>
    <scope>NUCLEOTIDE SEQUENCE [LARGE SCALE GENOMIC DNA]</scope>
    <source>
        <strain>SCHU S4 / Schu 4</strain>
    </source>
</reference>
<gene>
    <name evidence="1" type="primary">fluC</name>
    <name evidence="1" type="synonym">crcB</name>
    <name type="ordered locus">FTT_0260</name>
</gene>
<sequence length="130" mass="13895">MGLLLLLVGIGGGFGAMARFALTQATASISKQIPLGILLCNIIGSLIIGMMAAFLIETKLFNEDVSTYVRFLLVTGFLGGFTTFSSFSLDILNLLQRGEIFIAIGYIMVSVLASLIAVILGFYIVMGVYK</sequence>
<protein>
    <recommendedName>
        <fullName evidence="1">Fluoride-specific ion channel FluC</fullName>
    </recommendedName>
</protein>
<organism>
    <name type="scientific">Francisella tularensis subsp. tularensis (strain SCHU S4 / Schu 4)</name>
    <dbReference type="NCBI Taxonomy" id="177416"/>
    <lineage>
        <taxon>Bacteria</taxon>
        <taxon>Pseudomonadati</taxon>
        <taxon>Pseudomonadota</taxon>
        <taxon>Gammaproteobacteria</taxon>
        <taxon>Thiotrichales</taxon>
        <taxon>Francisellaceae</taxon>
        <taxon>Francisella</taxon>
    </lineage>
</organism>
<proteinExistence type="inferred from homology"/>
<name>FLUC_FRATT</name>